<name>ATPG_TRICV</name>
<evidence type="ECO:0000250" key="1"/>
<evidence type="ECO:0000305" key="2"/>
<organism>
    <name type="scientific">Trieres chinensis</name>
    <name type="common">Marine centric diatom</name>
    <name type="synonym">Odontella sinensis</name>
    <dbReference type="NCBI Taxonomy" id="1514140"/>
    <lineage>
        <taxon>Eukaryota</taxon>
        <taxon>Sar</taxon>
        <taxon>Stramenopiles</taxon>
        <taxon>Ochrophyta</taxon>
        <taxon>Bacillariophyta</taxon>
        <taxon>Mediophyceae</taxon>
        <taxon>Biddulphiophycidae</taxon>
        <taxon>Eupodiscales</taxon>
        <taxon>Parodontellaceae</taxon>
        <taxon>Trieres</taxon>
    </lineage>
</organism>
<dbReference type="EMBL" id="X70650">
    <property type="protein sequence ID" value="CAA49993.1"/>
    <property type="molecule type" value="mRNA"/>
</dbReference>
<dbReference type="PIR" id="S32401">
    <property type="entry name" value="S32401"/>
</dbReference>
<dbReference type="SMR" id="Q06908"/>
<dbReference type="GO" id="GO:0009535">
    <property type="term" value="C:chloroplast thylakoid membrane"/>
    <property type="evidence" value="ECO:0007669"/>
    <property type="project" value="UniProtKB-SubCell"/>
</dbReference>
<dbReference type="GO" id="GO:0045259">
    <property type="term" value="C:proton-transporting ATP synthase complex"/>
    <property type="evidence" value="ECO:0007669"/>
    <property type="project" value="UniProtKB-KW"/>
</dbReference>
<dbReference type="GO" id="GO:0046933">
    <property type="term" value="F:proton-transporting ATP synthase activity, rotational mechanism"/>
    <property type="evidence" value="ECO:0007669"/>
    <property type="project" value="InterPro"/>
</dbReference>
<dbReference type="CDD" id="cd12151">
    <property type="entry name" value="F1-ATPase_gamma"/>
    <property type="match status" value="1"/>
</dbReference>
<dbReference type="FunFam" id="3.40.1380.10:FF:000006">
    <property type="entry name" value="ATP synthase gamma chain"/>
    <property type="match status" value="1"/>
</dbReference>
<dbReference type="FunFam" id="1.10.287.80:FF:000003">
    <property type="entry name" value="ATP synthase gamma chain, chloroplastic"/>
    <property type="match status" value="1"/>
</dbReference>
<dbReference type="Gene3D" id="3.40.1380.10">
    <property type="match status" value="1"/>
</dbReference>
<dbReference type="Gene3D" id="1.10.287.80">
    <property type="entry name" value="ATP synthase, gamma subunit, helix hairpin domain"/>
    <property type="match status" value="2"/>
</dbReference>
<dbReference type="HAMAP" id="MF_00815">
    <property type="entry name" value="ATP_synth_gamma_bact"/>
    <property type="match status" value="1"/>
</dbReference>
<dbReference type="InterPro" id="IPR035968">
    <property type="entry name" value="ATP_synth_F1_ATPase_gsu"/>
</dbReference>
<dbReference type="InterPro" id="IPR000131">
    <property type="entry name" value="ATP_synth_F1_gsu"/>
</dbReference>
<dbReference type="InterPro" id="IPR023632">
    <property type="entry name" value="ATP_synth_F1_gsu_CS"/>
</dbReference>
<dbReference type="NCBIfam" id="TIGR01146">
    <property type="entry name" value="ATPsyn_F1gamma"/>
    <property type="match status" value="1"/>
</dbReference>
<dbReference type="NCBIfam" id="NF004145">
    <property type="entry name" value="PRK05621.1-2"/>
    <property type="match status" value="1"/>
</dbReference>
<dbReference type="PANTHER" id="PTHR11693">
    <property type="entry name" value="ATP SYNTHASE GAMMA CHAIN"/>
    <property type="match status" value="1"/>
</dbReference>
<dbReference type="PANTHER" id="PTHR11693:SF41">
    <property type="entry name" value="ATP SYNTHASE GAMMA CHAIN, CHLOROPLASTIC"/>
    <property type="match status" value="1"/>
</dbReference>
<dbReference type="Pfam" id="PF00231">
    <property type="entry name" value="ATP-synt"/>
    <property type="match status" value="1"/>
</dbReference>
<dbReference type="PRINTS" id="PR00126">
    <property type="entry name" value="ATPASEGAMMA"/>
</dbReference>
<dbReference type="SUPFAM" id="SSF52943">
    <property type="entry name" value="ATP synthase (F1-ATPase), gamma subunit"/>
    <property type="match status" value="1"/>
</dbReference>
<dbReference type="PROSITE" id="PS00153">
    <property type="entry name" value="ATPASE_GAMMA"/>
    <property type="match status" value="1"/>
</dbReference>
<feature type="transit peptide" description="Chloroplast">
    <location>
        <begin position="1"/>
        <end position="55"/>
    </location>
</feature>
<feature type="chain" id="PRO_0000002677" description="ATP synthase gamma chain, chloroplastic">
    <location>
        <begin position="56"/>
        <end position="370"/>
    </location>
</feature>
<feature type="active site" evidence="1">
    <location>
        <position position="145"/>
    </location>
</feature>
<sequence length="370" mass="40133">MKFFCVAGLLASAAAFQAQPAAFTTYSPAVGGATSNVFSESSSPAHRNRRATIVMDGKANAIRDRITSVKNTKKITMAMKLVAAAKVRRAQDAVLATRPFSETLQSVFGGLIARMGGEALDLPLLTQREVSKVTLVVITGDRGLCGGYNSFMIKKAEARFNELKDQGVACDMVLIGKKGITYFQRRGYPIRKTFETGQNPDSKQALAISEELLNTYLSGESDAVELLYTKFISLIASSPSARTLIPFSASEITQQGDEVFQLTSSGGDFEVERTELEVAEPQDFPNDMIFEQDPIQIINSILPLYLNGQILRTLQESVASELAARMQSMQSASDNAGDLAKRLSTEYNRARQAAVTQEILEIVSGASALE</sequence>
<proteinExistence type="evidence at protein level"/>
<keyword id="KW-0066">ATP synthesis</keyword>
<keyword id="KW-0139">CF(1)</keyword>
<keyword id="KW-0150">Chloroplast</keyword>
<keyword id="KW-0903">Direct protein sequencing</keyword>
<keyword id="KW-0375">Hydrogen ion transport</keyword>
<keyword id="KW-0406">Ion transport</keyword>
<keyword id="KW-0472">Membrane</keyword>
<keyword id="KW-0934">Plastid</keyword>
<keyword id="KW-0793">Thylakoid</keyword>
<keyword id="KW-0809">Transit peptide</keyword>
<keyword id="KW-0813">Transport</keyword>
<protein>
    <recommendedName>
        <fullName>ATP synthase gamma chain, chloroplastic</fullName>
    </recommendedName>
    <alternativeName>
        <fullName>F-ATPase gamma subunit</fullName>
    </alternativeName>
</protein>
<gene>
    <name type="primary">ATPC</name>
</gene>
<accession>Q06908</accession>
<reference key="1">
    <citation type="journal article" date="1993" name="FEBS Lett.">
        <title>Structure of the nuclear encoded gamma subunit of CF0CF1 of the diatom Odontella sinensis including its presequence.</title>
        <authorList>
            <person name="Pancic P.G."/>
            <person name="Strotmann H."/>
        </authorList>
    </citation>
    <scope>NUCLEOTIDE SEQUENCE [MRNA]</scope>
    <scope>PARTIAL PROTEIN SEQUENCE</scope>
</reference>
<comment type="function">
    <text>Produces ATP from ADP in the presence of a proton gradient across the membrane. The gamma chain is believed to be important in regulating ATPase activity and the flow of protons through the CF(0) complex.</text>
</comment>
<comment type="subunit">
    <text evidence="1">F-type ATPases have 2 components, CF(1) - the catalytic core - and CF(0) - the membrane proton channel. CF(1) has five subunits: alpha(3), beta(3), gamma(1), delta(1), epsilon(1). CF(0) has four main subunits: a, b, b' and c (By similarity).</text>
</comment>
<comment type="subcellular location">
    <subcellularLocation>
        <location evidence="1">Plastid</location>
        <location evidence="1">Chloroplast thylakoid membrane</location>
        <topology evidence="1">Peripheral membrane protein</topology>
    </subcellularLocation>
</comment>
<comment type="similarity">
    <text evidence="2">Belongs to the ATPase gamma chain family.</text>
</comment>